<evidence type="ECO:0000250" key="1">
    <source>
        <dbReference type="UniProtKB" id="Q9NQT5"/>
    </source>
</evidence>
<evidence type="ECO:0000269" key="2">
    <source>
    </source>
</evidence>
<evidence type="ECO:0000305" key="3"/>
<comment type="function">
    <text evidence="1 2">Non-catalytic component of the RNA exosome complex which has 3'-&gt;5' exoribonuclease activity and participates in a multitude of cellular RNA processing and degradation events. In the nucleus, the RNA exosome complex is involved in proper maturation of stable RNA species such as rRNA, snRNA and snoRNA, in the elimination of RNA processing by-products and non-coding 'pervasive' transcripts, such as antisense RNA species and promoter-upstream transcripts (PROMPTs), and of mRNAs with processing defects, thereby limiting or excluding their export to the cytoplasm. The RNA exosome may be involved in Ig class switch recombination (CSR) and/or Ig variable region somatic hypermutation (SHM) by targeting AICDA deamination activity to transcribed dsDNA substrates. In the cytoplasm, the RNA exosome complex is involved in general mRNA turnover and specifically degrades inherently unstable mRNAs containing AU-rich elements (AREs) within their 3' untranslated regions, and in RNA surveillance pathways, preventing translation of aberrant mRNAs. It seems to be involved in degradation of histone mRNA. The catalytic inactive RNA exosome core complex of 9 subunits (Exo-9) is proposed to play a pivotal role in the binding and presentation of RNA for ribonucleolysis, and to serve as a scaffold for the association with catalytic subunits and accessory proteins or complexes. EXOSC3 as peripheral part of the Exo-9 complex stabilizes the hexameric ring of RNase PH-domain subunits through contacts with EXOSC9 and EXOSC5 (By similarity).</text>
</comment>
<comment type="subunit">
    <text evidence="1">Component of the RNA exosome core complex (Exo-9), composed of EXOSC1, EXOSC2, EXOSC3, EXOSC4, EXOSC5, EXOSC6, EXOSC7, EXOSC8 and EXOSC9; within the complex interacts with EXOSC5 and EXOSC9 (By similarity). The catalytically inactive RNA exosome core complex (Exo-9) associates with the catalytic subunit EXOSC10/RRP6 (By similarity). Exo-9 may associate with DIS3 to form the nucleolar exosome complex, or DIS3L to form the cytoplasmic exosome complex (By similarity). Exo-9 is formed by a hexameric base ring consisting of the heterodimers EXOSC4-EXOSC9, EXOSC5-EXOSC8 and EXOSC6-EXOSC7, and a cap ring consisting of EXOSC1, EXOSC2 and EXOSC3 (By similarity). The RNA exosome complex associates with cofactors C1D/RRP47, MPHOSPH6/MPP6 and MTREX/MTR4 (By similarity). Interacts with MPHOSPH6/MPP6; the interaction is direct (By similarity). Interacts with GTPBP1 (By similarity). Interacts with ZC3HAV1 (By similarity). Interacts with DDX17 only in the presence of ZC3HAV1 in an RNA-independent manner (By similarity). Interacts with DHX36; this interaction occurs in a RNase-insensitive manner (By similarity). Interacts with HBS1L isoform 2 (By similarity).</text>
</comment>
<comment type="subcellular location">
    <subcellularLocation>
        <location evidence="1">Cytoplasm</location>
    </subcellularLocation>
    <subcellularLocation>
        <location evidence="1">Nucleus</location>
        <location evidence="1">Nucleolus</location>
    </subcellularLocation>
    <subcellularLocation>
        <location evidence="1">Nucleus</location>
    </subcellularLocation>
</comment>
<comment type="similarity">
    <text evidence="3">Belongs to the RRP40 family.</text>
</comment>
<reference key="1">
    <citation type="journal article" date="2004" name="Genome Res.">
        <title>The status, quality, and expansion of the NIH full-length cDNA project: the Mammalian Gene Collection (MGC).</title>
        <authorList>
            <consortium name="The MGC Project Team"/>
        </authorList>
    </citation>
    <scope>NUCLEOTIDE SEQUENCE [LARGE SCALE MRNA]</scope>
    <source>
        <tissue>Mammary gland</tissue>
    </source>
</reference>
<reference key="2">
    <citation type="journal article" date="2005" name="Science">
        <title>The transcriptional landscape of the mammalian genome.</title>
        <authorList>
            <person name="Carninci P."/>
            <person name="Kasukawa T."/>
            <person name="Katayama S."/>
            <person name="Gough J."/>
            <person name="Frith M.C."/>
            <person name="Maeda N."/>
            <person name="Oyama R."/>
            <person name="Ravasi T."/>
            <person name="Lenhard B."/>
            <person name="Wells C."/>
            <person name="Kodzius R."/>
            <person name="Shimokawa K."/>
            <person name="Bajic V.B."/>
            <person name="Brenner S.E."/>
            <person name="Batalov S."/>
            <person name="Forrest A.R."/>
            <person name="Zavolan M."/>
            <person name="Davis M.J."/>
            <person name="Wilming L.G."/>
            <person name="Aidinis V."/>
            <person name="Allen J.E."/>
            <person name="Ambesi-Impiombato A."/>
            <person name="Apweiler R."/>
            <person name="Aturaliya R.N."/>
            <person name="Bailey T.L."/>
            <person name="Bansal M."/>
            <person name="Baxter L."/>
            <person name="Beisel K.W."/>
            <person name="Bersano T."/>
            <person name="Bono H."/>
            <person name="Chalk A.M."/>
            <person name="Chiu K.P."/>
            <person name="Choudhary V."/>
            <person name="Christoffels A."/>
            <person name="Clutterbuck D.R."/>
            <person name="Crowe M.L."/>
            <person name="Dalla E."/>
            <person name="Dalrymple B.P."/>
            <person name="de Bono B."/>
            <person name="Della Gatta G."/>
            <person name="di Bernardo D."/>
            <person name="Down T."/>
            <person name="Engstrom P."/>
            <person name="Fagiolini M."/>
            <person name="Faulkner G."/>
            <person name="Fletcher C.F."/>
            <person name="Fukushima T."/>
            <person name="Furuno M."/>
            <person name="Futaki S."/>
            <person name="Gariboldi M."/>
            <person name="Georgii-Hemming P."/>
            <person name="Gingeras T.R."/>
            <person name="Gojobori T."/>
            <person name="Green R.E."/>
            <person name="Gustincich S."/>
            <person name="Harbers M."/>
            <person name="Hayashi Y."/>
            <person name="Hensch T.K."/>
            <person name="Hirokawa N."/>
            <person name="Hill D."/>
            <person name="Huminiecki L."/>
            <person name="Iacono M."/>
            <person name="Ikeo K."/>
            <person name="Iwama A."/>
            <person name="Ishikawa T."/>
            <person name="Jakt M."/>
            <person name="Kanapin A."/>
            <person name="Katoh M."/>
            <person name="Kawasawa Y."/>
            <person name="Kelso J."/>
            <person name="Kitamura H."/>
            <person name="Kitano H."/>
            <person name="Kollias G."/>
            <person name="Krishnan S.P."/>
            <person name="Kruger A."/>
            <person name="Kummerfeld S.K."/>
            <person name="Kurochkin I.V."/>
            <person name="Lareau L.F."/>
            <person name="Lazarevic D."/>
            <person name="Lipovich L."/>
            <person name="Liu J."/>
            <person name="Liuni S."/>
            <person name="McWilliam S."/>
            <person name="Madan Babu M."/>
            <person name="Madera M."/>
            <person name="Marchionni L."/>
            <person name="Matsuda H."/>
            <person name="Matsuzawa S."/>
            <person name="Miki H."/>
            <person name="Mignone F."/>
            <person name="Miyake S."/>
            <person name="Morris K."/>
            <person name="Mottagui-Tabar S."/>
            <person name="Mulder N."/>
            <person name="Nakano N."/>
            <person name="Nakauchi H."/>
            <person name="Ng P."/>
            <person name="Nilsson R."/>
            <person name="Nishiguchi S."/>
            <person name="Nishikawa S."/>
            <person name="Nori F."/>
            <person name="Ohara O."/>
            <person name="Okazaki Y."/>
            <person name="Orlando V."/>
            <person name="Pang K.C."/>
            <person name="Pavan W.J."/>
            <person name="Pavesi G."/>
            <person name="Pesole G."/>
            <person name="Petrovsky N."/>
            <person name="Piazza S."/>
            <person name="Reed J."/>
            <person name="Reid J.F."/>
            <person name="Ring B.Z."/>
            <person name="Ringwald M."/>
            <person name="Rost B."/>
            <person name="Ruan Y."/>
            <person name="Salzberg S.L."/>
            <person name="Sandelin A."/>
            <person name="Schneider C."/>
            <person name="Schoenbach C."/>
            <person name="Sekiguchi K."/>
            <person name="Semple C.A."/>
            <person name="Seno S."/>
            <person name="Sessa L."/>
            <person name="Sheng Y."/>
            <person name="Shibata Y."/>
            <person name="Shimada H."/>
            <person name="Shimada K."/>
            <person name="Silva D."/>
            <person name="Sinclair B."/>
            <person name="Sperling S."/>
            <person name="Stupka E."/>
            <person name="Sugiura K."/>
            <person name="Sultana R."/>
            <person name="Takenaka Y."/>
            <person name="Taki K."/>
            <person name="Tammoja K."/>
            <person name="Tan S.L."/>
            <person name="Tang S."/>
            <person name="Taylor M.S."/>
            <person name="Tegner J."/>
            <person name="Teichmann S.A."/>
            <person name="Ueda H.R."/>
            <person name="van Nimwegen E."/>
            <person name="Verardo R."/>
            <person name="Wei C.L."/>
            <person name="Yagi K."/>
            <person name="Yamanishi H."/>
            <person name="Zabarovsky E."/>
            <person name="Zhu S."/>
            <person name="Zimmer A."/>
            <person name="Hide W."/>
            <person name="Bult C."/>
            <person name="Grimmond S.M."/>
            <person name="Teasdale R.D."/>
            <person name="Liu E.T."/>
            <person name="Brusic V."/>
            <person name="Quackenbush J."/>
            <person name="Wahlestedt C."/>
            <person name="Mattick J.S."/>
            <person name="Hume D.A."/>
            <person name="Kai C."/>
            <person name="Sasaki D."/>
            <person name="Tomaru Y."/>
            <person name="Fukuda S."/>
            <person name="Kanamori-Katayama M."/>
            <person name="Suzuki M."/>
            <person name="Aoki J."/>
            <person name="Arakawa T."/>
            <person name="Iida J."/>
            <person name="Imamura K."/>
            <person name="Itoh M."/>
            <person name="Kato T."/>
            <person name="Kawaji H."/>
            <person name="Kawagashira N."/>
            <person name="Kawashima T."/>
            <person name="Kojima M."/>
            <person name="Kondo S."/>
            <person name="Konno H."/>
            <person name="Nakano K."/>
            <person name="Ninomiya N."/>
            <person name="Nishio T."/>
            <person name="Okada M."/>
            <person name="Plessy C."/>
            <person name="Shibata K."/>
            <person name="Shiraki T."/>
            <person name="Suzuki S."/>
            <person name="Tagami M."/>
            <person name="Waki K."/>
            <person name="Watahiki A."/>
            <person name="Okamura-Oho Y."/>
            <person name="Suzuki H."/>
            <person name="Kawai J."/>
            <person name="Hayashizaki Y."/>
        </authorList>
    </citation>
    <scope>NUCLEOTIDE SEQUENCE [LARGE SCALE MRNA] OF 32-274</scope>
    <source>
        <strain>C57BL/6J</strain>
        <tissue>Testis</tissue>
        <tissue>Tongue</tissue>
    </source>
</reference>
<reference key="3">
    <citation type="journal article" date="2010" name="Cell">
        <title>A tissue-specific atlas of mouse protein phosphorylation and expression.</title>
        <authorList>
            <person name="Huttlin E.L."/>
            <person name="Jedrychowski M.P."/>
            <person name="Elias J.E."/>
            <person name="Goswami T."/>
            <person name="Rad R."/>
            <person name="Beausoleil S.A."/>
            <person name="Villen J."/>
            <person name="Haas W."/>
            <person name="Sowa M.E."/>
            <person name="Gygi S.P."/>
        </authorList>
    </citation>
    <scope>IDENTIFICATION BY MASS SPECTROMETRY [LARGE SCALE ANALYSIS]</scope>
    <source>
        <tissue>Brain</tissue>
        <tissue>Liver</tissue>
        <tissue>Lung</tissue>
        <tissue>Spleen</tissue>
        <tissue>Testis</tissue>
    </source>
</reference>
<reference key="4">
    <citation type="journal article" date="2011" name="Cell">
        <title>The RNA exosome targets the AID cytidine deaminase to both strands of transcribed duplex DNA substrates.</title>
        <authorList>
            <person name="Basu U."/>
            <person name="Meng F.L."/>
            <person name="Keim C."/>
            <person name="Grinstein V."/>
            <person name="Pefanis E."/>
            <person name="Eccleston J."/>
            <person name="Zhang T."/>
            <person name="Myers D."/>
            <person name="Wasserman C.R."/>
            <person name="Wesemann D.R."/>
            <person name="Januszyk K."/>
            <person name="Gregory R.I."/>
            <person name="Deng H."/>
            <person name="Lima C.D."/>
            <person name="Alt F.W."/>
        </authorList>
    </citation>
    <scope>FUNCTION IN IG CLASS-SWITCH</scope>
</reference>
<dbReference type="EC" id="3.1.13.-"/>
<dbReference type="EMBL" id="BC023669">
    <property type="protein sequence ID" value="AAH23669.1"/>
    <property type="molecule type" value="mRNA"/>
</dbReference>
<dbReference type="EMBL" id="BC054085">
    <property type="protein sequence ID" value="AAH54085.1"/>
    <property type="molecule type" value="mRNA"/>
</dbReference>
<dbReference type="EMBL" id="AK006281">
    <property type="protein sequence ID" value="BAB24501.1"/>
    <property type="molecule type" value="mRNA"/>
</dbReference>
<dbReference type="EMBL" id="AK009165">
    <property type="protein sequence ID" value="BAB26116.1"/>
    <property type="molecule type" value="mRNA"/>
</dbReference>
<dbReference type="CCDS" id="CCDS18136.1"/>
<dbReference type="RefSeq" id="NP_079789.1">
    <property type="nucleotide sequence ID" value="NM_025513.4"/>
</dbReference>
<dbReference type="SMR" id="Q7TQK4"/>
<dbReference type="BioGRID" id="211414">
    <property type="interactions" value="3"/>
</dbReference>
<dbReference type="ComplexPortal" id="CPX-594">
    <property type="entry name" value="Nuclear exosome complex, Dis3-Exosc10 variant"/>
</dbReference>
<dbReference type="ComplexPortal" id="CPX-595">
    <property type="entry name" value="Nucleolar exosome complex, Exosc10 variant"/>
</dbReference>
<dbReference type="ComplexPortal" id="CPX-596">
    <property type="entry name" value="Cytoplasmic exosome complex, Dis3l variant"/>
</dbReference>
<dbReference type="ComplexPortal" id="CPX-598">
    <property type="entry name" value="Exosome complex, Dis3 variant"/>
</dbReference>
<dbReference type="ComplexPortal" id="CPX-601">
    <property type="entry name" value="Cytoplasmic exosome complex, Dis3l-Exosc10 variant"/>
</dbReference>
<dbReference type="FunCoup" id="Q7TQK4">
    <property type="interactions" value="3133"/>
</dbReference>
<dbReference type="IntAct" id="Q7TQK4">
    <property type="interactions" value="1"/>
</dbReference>
<dbReference type="STRING" id="10090.ENSMUSP00000030003"/>
<dbReference type="GlyGen" id="Q7TQK4">
    <property type="glycosylation" value="1 site, 1 O-linked glycan (1 site)"/>
</dbReference>
<dbReference type="iPTMnet" id="Q7TQK4"/>
<dbReference type="PhosphoSitePlus" id="Q7TQK4"/>
<dbReference type="PaxDb" id="10090-ENSMUSP00000030003"/>
<dbReference type="PeptideAtlas" id="Q7TQK4"/>
<dbReference type="ProteomicsDB" id="275705"/>
<dbReference type="Pumba" id="Q7TQK4"/>
<dbReference type="Antibodypedia" id="12051">
    <property type="antibodies" value="288 antibodies from 27 providers"/>
</dbReference>
<dbReference type="DNASU" id="66362"/>
<dbReference type="Ensembl" id="ENSMUST00000030003.10">
    <property type="protein sequence ID" value="ENSMUSP00000030003.4"/>
    <property type="gene ID" value="ENSMUSG00000028322.12"/>
</dbReference>
<dbReference type="GeneID" id="66362"/>
<dbReference type="KEGG" id="mmu:66362"/>
<dbReference type="UCSC" id="uc008ssk.1">
    <property type="organism name" value="mouse"/>
</dbReference>
<dbReference type="AGR" id="MGI:1913612"/>
<dbReference type="CTD" id="51010"/>
<dbReference type="MGI" id="MGI:1913612">
    <property type="gene designation" value="Exosc3"/>
</dbReference>
<dbReference type="VEuPathDB" id="HostDB:ENSMUSG00000028322"/>
<dbReference type="eggNOG" id="KOG1004">
    <property type="taxonomic scope" value="Eukaryota"/>
</dbReference>
<dbReference type="GeneTree" id="ENSGT00940000153596"/>
<dbReference type="HOGENOM" id="CLU_069847_5_1_1"/>
<dbReference type="InParanoid" id="Q7TQK4"/>
<dbReference type="OMA" id="SYMAFPN"/>
<dbReference type="OrthoDB" id="340500at2759"/>
<dbReference type="PhylomeDB" id="Q7TQK4"/>
<dbReference type="TreeFam" id="TF314927"/>
<dbReference type="Reactome" id="R-MMU-429958">
    <property type="pathway name" value="mRNA decay by 3' to 5' exoribonuclease"/>
</dbReference>
<dbReference type="Reactome" id="R-MMU-450385">
    <property type="pathway name" value="Butyrate Response Factor 1 (BRF1) binds and destabilizes mRNA"/>
</dbReference>
<dbReference type="Reactome" id="R-MMU-450513">
    <property type="pathway name" value="Tristetraprolin (TTP, ZFP36) binds and destabilizes mRNA"/>
</dbReference>
<dbReference type="Reactome" id="R-MMU-450604">
    <property type="pathway name" value="KSRP (KHSRP) binds and destabilizes mRNA"/>
</dbReference>
<dbReference type="Reactome" id="R-MMU-6791226">
    <property type="pathway name" value="Major pathway of rRNA processing in the nucleolus and cytosol"/>
</dbReference>
<dbReference type="BioGRID-ORCS" id="66362">
    <property type="hits" value="26 hits in 118 CRISPR screens"/>
</dbReference>
<dbReference type="ChiTaRS" id="Exosc3">
    <property type="organism name" value="mouse"/>
</dbReference>
<dbReference type="PRO" id="PR:Q7TQK4"/>
<dbReference type="Proteomes" id="UP000000589">
    <property type="component" value="Chromosome 4"/>
</dbReference>
<dbReference type="RNAct" id="Q7TQK4">
    <property type="molecule type" value="protein"/>
</dbReference>
<dbReference type="Bgee" id="ENSMUSG00000028322">
    <property type="expression patterns" value="Expressed in embryonic post-anal tail and 207 other cell types or tissues"/>
</dbReference>
<dbReference type="ExpressionAtlas" id="Q7TQK4">
    <property type="expression patterns" value="baseline and differential"/>
</dbReference>
<dbReference type="GO" id="GO:0000177">
    <property type="term" value="C:cytoplasmic exosome (RNase complex)"/>
    <property type="evidence" value="ECO:0000303"/>
    <property type="project" value="ComplexPortal"/>
</dbReference>
<dbReference type="GO" id="GO:0005829">
    <property type="term" value="C:cytosol"/>
    <property type="evidence" value="ECO:0000266"/>
    <property type="project" value="ComplexPortal"/>
</dbReference>
<dbReference type="GO" id="GO:0000791">
    <property type="term" value="C:euchromatin"/>
    <property type="evidence" value="ECO:0007669"/>
    <property type="project" value="Ensembl"/>
</dbReference>
<dbReference type="GO" id="GO:0000178">
    <property type="term" value="C:exosome (RNase complex)"/>
    <property type="evidence" value="ECO:0000250"/>
    <property type="project" value="UniProtKB"/>
</dbReference>
<dbReference type="GO" id="GO:0000176">
    <property type="term" value="C:nuclear exosome (RNase complex)"/>
    <property type="evidence" value="ECO:0000303"/>
    <property type="project" value="ComplexPortal"/>
</dbReference>
<dbReference type="GO" id="GO:0101019">
    <property type="term" value="C:nucleolar exosome (RNase complex)"/>
    <property type="evidence" value="ECO:0000303"/>
    <property type="project" value="ComplexPortal"/>
</dbReference>
<dbReference type="GO" id="GO:0005730">
    <property type="term" value="C:nucleolus"/>
    <property type="evidence" value="ECO:0000250"/>
    <property type="project" value="UniProtKB"/>
</dbReference>
<dbReference type="GO" id="GO:0005654">
    <property type="term" value="C:nucleoplasm"/>
    <property type="evidence" value="ECO:0007669"/>
    <property type="project" value="Ensembl"/>
</dbReference>
<dbReference type="GO" id="GO:0005634">
    <property type="term" value="C:nucleus"/>
    <property type="evidence" value="ECO:0000266"/>
    <property type="project" value="ComplexPortal"/>
</dbReference>
<dbReference type="GO" id="GO:0004527">
    <property type="term" value="F:exonuclease activity"/>
    <property type="evidence" value="ECO:0007669"/>
    <property type="project" value="UniProtKB-KW"/>
</dbReference>
<dbReference type="GO" id="GO:0003723">
    <property type="term" value="F:RNA binding"/>
    <property type="evidence" value="ECO:0007669"/>
    <property type="project" value="UniProtKB-KW"/>
</dbReference>
<dbReference type="GO" id="GO:0071034">
    <property type="term" value="P:CUT catabolic process"/>
    <property type="evidence" value="ECO:0007669"/>
    <property type="project" value="Ensembl"/>
</dbReference>
<dbReference type="GO" id="GO:0045006">
    <property type="term" value="P:DNA deamination"/>
    <property type="evidence" value="ECO:0007669"/>
    <property type="project" value="Ensembl"/>
</dbReference>
<dbReference type="GO" id="GO:0045190">
    <property type="term" value="P:isotype switching"/>
    <property type="evidence" value="ECO:0000315"/>
    <property type="project" value="UniProtKB"/>
</dbReference>
<dbReference type="GO" id="GO:0006402">
    <property type="term" value="P:mRNA catabolic process"/>
    <property type="evidence" value="ECO:0007669"/>
    <property type="project" value="Ensembl"/>
</dbReference>
<dbReference type="GO" id="GO:0045830">
    <property type="term" value="P:positive regulation of isotype switching"/>
    <property type="evidence" value="ECO:0000315"/>
    <property type="project" value="MGI"/>
</dbReference>
<dbReference type="GO" id="GO:0006401">
    <property type="term" value="P:RNA catabolic process"/>
    <property type="evidence" value="ECO:0000266"/>
    <property type="project" value="ComplexPortal"/>
</dbReference>
<dbReference type="GO" id="GO:0006396">
    <property type="term" value="P:RNA processing"/>
    <property type="evidence" value="ECO:0000266"/>
    <property type="project" value="ComplexPortal"/>
</dbReference>
<dbReference type="GO" id="GO:0006364">
    <property type="term" value="P:rRNA processing"/>
    <property type="evidence" value="ECO:0007669"/>
    <property type="project" value="UniProtKB-KW"/>
</dbReference>
<dbReference type="CDD" id="cd22526">
    <property type="entry name" value="KH-I_Rrp40"/>
    <property type="match status" value="1"/>
</dbReference>
<dbReference type="CDD" id="cd05790">
    <property type="entry name" value="S1_Rrp40"/>
    <property type="match status" value="1"/>
</dbReference>
<dbReference type="FunFam" id="2.40.50.140:FF:000112">
    <property type="entry name" value="Exosome complex component RRP40"/>
    <property type="match status" value="1"/>
</dbReference>
<dbReference type="FunFam" id="2.40.50.100:FF:000044">
    <property type="entry name" value="exosome complex component RRP40"/>
    <property type="match status" value="1"/>
</dbReference>
<dbReference type="FunFam" id="3.30.1370.10:FF:000038">
    <property type="entry name" value="exosome complex component RRP40"/>
    <property type="match status" value="1"/>
</dbReference>
<dbReference type="Gene3D" id="2.40.50.100">
    <property type="match status" value="1"/>
</dbReference>
<dbReference type="Gene3D" id="3.30.1370.10">
    <property type="entry name" value="K Homology domain, type 1"/>
    <property type="match status" value="1"/>
</dbReference>
<dbReference type="Gene3D" id="2.40.50.140">
    <property type="entry name" value="Nucleic acid-binding proteins"/>
    <property type="match status" value="1"/>
</dbReference>
<dbReference type="InterPro" id="IPR026699">
    <property type="entry name" value="Exosome_RNA_bind1/RRP40/RRP4"/>
</dbReference>
<dbReference type="InterPro" id="IPR004088">
    <property type="entry name" value="KH_dom_type_1"/>
</dbReference>
<dbReference type="InterPro" id="IPR036612">
    <property type="entry name" value="KH_dom_type_1_sf"/>
</dbReference>
<dbReference type="InterPro" id="IPR012340">
    <property type="entry name" value="NA-bd_OB-fold"/>
</dbReference>
<dbReference type="InterPro" id="IPR049469">
    <property type="entry name" value="RRP40_KH-I"/>
</dbReference>
<dbReference type="InterPro" id="IPR048541">
    <property type="entry name" value="RRP40_N"/>
</dbReference>
<dbReference type="InterPro" id="IPR037319">
    <property type="entry name" value="Rrp40_S1"/>
</dbReference>
<dbReference type="PANTHER" id="PTHR21321:SF1">
    <property type="entry name" value="EXOSOME COMPLEX COMPONENT RRP40"/>
    <property type="match status" value="1"/>
</dbReference>
<dbReference type="PANTHER" id="PTHR21321">
    <property type="entry name" value="PNAS-3 RELATED"/>
    <property type="match status" value="1"/>
</dbReference>
<dbReference type="Pfam" id="PF15985">
    <property type="entry name" value="KH_6"/>
    <property type="match status" value="1"/>
</dbReference>
<dbReference type="Pfam" id="PF21261">
    <property type="entry name" value="RRP40_N_mamm"/>
    <property type="match status" value="1"/>
</dbReference>
<dbReference type="Pfam" id="PF21262">
    <property type="entry name" value="RRP40_S1"/>
    <property type="match status" value="1"/>
</dbReference>
<dbReference type="SUPFAM" id="SSF54791">
    <property type="entry name" value="Eukaryotic type KH-domain (KH-domain type I)"/>
    <property type="match status" value="1"/>
</dbReference>
<dbReference type="SUPFAM" id="SSF50249">
    <property type="entry name" value="Nucleic acid-binding proteins"/>
    <property type="match status" value="1"/>
</dbReference>
<dbReference type="SUPFAM" id="SSF110324">
    <property type="entry name" value="Ribosomal L27 protein-like"/>
    <property type="match status" value="1"/>
</dbReference>
<gene>
    <name type="primary">Exosc3</name>
    <name type="synonym">Rrp40</name>
</gene>
<feature type="initiator methionine" description="Removed" evidence="1">
    <location>
        <position position="1"/>
    </location>
</feature>
<feature type="chain" id="PRO_0000087132" description="Exosome complex component RRP40">
    <location>
        <begin position="2"/>
        <end position="274"/>
    </location>
</feature>
<feature type="modified residue" description="N-acetylalanine" evidence="1">
    <location>
        <position position="2"/>
    </location>
</feature>
<feature type="cross-link" description="Glycyl lysine isopeptide (Lys-Gly) (interchain with G-Cter in SUMO2)" evidence="1">
    <location>
        <position position="150"/>
    </location>
</feature>
<feature type="sequence conflict" description="In Ref. 2; BAB24501." evidence="3" ref="2">
    <original>E</original>
    <variation>P</variation>
    <location>
        <position position="32"/>
    </location>
</feature>
<proteinExistence type="evidence at protein level"/>
<accession>Q7TQK4</accession>
<accession>Q9CV81</accession>
<accession>Q9CVW2</accession>
<organism>
    <name type="scientific">Mus musculus</name>
    <name type="common">Mouse</name>
    <dbReference type="NCBI Taxonomy" id="10090"/>
    <lineage>
        <taxon>Eukaryota</taxon>
        <taxon>Metazoa</taxon>
        <taxon>Chordata</taxon>
        <taxon>Craniata</taxon>
        <taxon>Vertebrata</taxon>
        <taxon>Euteleostomi</taxon>
        <taxon>Mammalia</taxon>
        <taxon>Eutheria</taxon>
        <taxon>Euarchontoglires</taxon>
        <taxon>Glires</taxon>
        <taxon>Rodentia</taxon>
        <taxon>Myomorpha</taxon>
        <taxon>Muroidea</taxon>
        <taxon>Muridae</taxon>
        <taxon>Murinae</taxon>
        <taxon>Mus</taxon>
        <taxon>Mus</taxon>
    </lineage>
</organism>
<sequence length="274" mass="29546">MAEVLSAGPESVAGCRARAVHKVLNQVVLPGEELVLPDHEDVDGLGGAGEQPLRLNAGARPRLRVVCGPGLRRCGDRLLVTKCGRLRHKEPSGGGGGVYWVDSQQKRYVPVKGDHVIGIVIAKSGDIFKVDVGGSEPASLSYLAFEGATKRNRPNVQVGDLIYGQCVVANKDMEPEMVCIDSCGRANGMGVIGQDGLLFKVTLGLIRKLLAPDCEIVQELGKLYPLEIVFGMNGRIWVKAKTIQQTLILANVLEACEHMTTEQRKQIFARLAES</sequence>
<name>EXOS3_MOUSE</name>
<protein>
    <recommendedName>
        <fullName>Exosome complex component RRP40</fullName>
        <ecNumber>3.1.13.-</ecNumber>
    </recommendedName>
    <alternativeName>
        <fullName>Exosome component 3</fullName>
    </alternativeName>
    <alternativeName>
        <fullName>Ribosomal RNA-processing protein 40</fullName>
    </alternativeName>
</protein>
<keyword id="KW-0007">Acetylation</keyword>
<keyword id="KW-0963">Cytoplasm</keyword>
<keyword id="KW-0269">Exonuclease</keyword>
<keyword id="KW-0271">Exosome</keyword>
<keyword id="KW-0378">Hydrolase</keyword>
<keyword id="KW-1017">Isopeptide bond</keyword>
<keyword id="KW-0540">Nuclease</keyword>
<keyword id="KW-0539">Nucleus</keyword>
<keyword id="KW-1185">Reference proteome</keyword>
<keyword id="KW-0694">RNA-binding</keyword>
<keyword id="KW-0698">rRNA processing</keyword>
<keyword id="KW-0832">Ubl conjugation</keyword>